<proteinExistence type="inferred from homology"/>
<accession>P26340</accession>
<comment type="function">
    <text>Involved in the biosynthesis of the capsular polysaccharide colanic acid.</text>
</comment>
<comment type="catalytic activity">
    <reaction>
        <text>alpha-D-mannose 1-phosphate + GTP + H(+) = GDP-alpha-D-mannose + diphosphate</text>
        <dbReference type="Rhea" id="RHEA:15229"/>
        <dbReference type="ChEBI" id="CHEBI:15378"/>
        <dbReference type="ChEBI" id="CHEBI:33019"/>
        <dbReference type="ChEBI" id="CHEBI:37565"/>
        <dbReference type="ChEBI" id="CHEBI:57527"/>
        <dbReference type="ChEBI" id="CHEBI:58409"/>
        <dbReference type="EC" id="2.7.7.13"/>
    </reaction>
</comment>
<comment type="pathway">
    <text>Nucleotide-sugar biosynthesis; GDP-alpha-D-mannose biosynthesis; GDP-alpha-D-mannose from alpha-D-mannose 1-phosphate (GTP route): step 1/1.</text>
</comment>
<comment type="similarity">
    <text evidence="1">Belongs to the mannose-6-phosphate isomerase type 2 family.</text>
</comment>
<evidence type="ECO:0000305" key="1"/>
<protein>
    <recommendedName>
        <fullName>Mannose-1-phosphate guanylyltransferase ManC</fullName>
        <ecNumber>2.7.7.13</ecNumber>
    </recommendedName>
    <alternativeName>
        <fullName>GDP-mannose pyrophosphorylase</fullName>
        <shortName>GMP</shortName>
        <shortName>GMPP</shortName>
    </alternativeName>
</protein>
<name>MANC_SALTY</name>
<reference key="1">
    <citation type="journal article" date="1991" name="Mol. Gen. Genet.">
        <title>The cps gene cluster of Salmonella strain LT2 includes a second mannose pathway: sequence of two genes and relationship to genes in the rfb gene cluster.</title>
        <authorList>
            <person name="Stevenson G."/>
            <person name="Lee S.J."/>
            <person name="Romana L.K."/>
            <person name="Reeves P.R."/>
        </authorList>
    </citation>
    <scope>NUCLEOTIDE SEQUENCE [GENOMIC DNA]</scope>
    <source>
        <strain>LT2</strain>
    </source>
</reference>
<reference key="2">
    <citation type="journal article" date="2001" name="Nature">
        <title>Complete genome sequence of Salmonella enterica serovar Typhimurium LT2.</title>
        <authorList>
            <person name="McClelland M."/>
            <person name="Sanderson K.E."/>
            <person name="Spieth J."/>
            <person name="Clifton S.W."/>
            <person name="Latreille P."/>
            <person name="Courtney L."/>
            <person name="Porwollik S."/>
            <person name="Ali J."/>
            <person name="Dante M."/>
            <person name="Du F."/>
            <person name="Hou S."/>
            <person name="Layman D."/>
            <person name="Leonard S."/>
            <person name="Nguyen C."/>
            <person name="Scott K."/>
            <person name="Holmes A."/>
            <person name="Grewal N."/>
            <person name="Mulvaney E."/>
            <person name="Ryan E."/>
            <person name="Sun H."/>
            <person name="Florea L."/>
            <person name="Miller W."/>
            <person name="Stoneking T."/>
            <person name="Nhan M."/>
            <person name="Waterston R."/>
            <person name="Wilson R.K."/>
        </authorList>
    </citation>
    <scope>NUCLEOTIDE SEQUENCE [LARGE SCALE GENOMIC DNA]</scope>
    <source>
        <strain>LT2 / SGSC1412 / ATCC 700720</strain>
    </source>
</reference>
<feature type="chain" id="PRO_0000194257" description="Mannose-1-phosphate guanylyltransferase ManC">
    <location>
        <begin position="1"/>
        <end position="480"/>
    </location>
</feature>
<organism>
    <name type="scientific">Salmonella typhimurium (strain LT2 / SGSC1412 / ATCC 700720)</name>
    <dbReference type="NCBI Taxonomy" id="99287"/>
    <lineage>
        <taxon>Bacteria</taxon>
        <taxon>Pseudomonadati</taxon>
        <taxon>Pseudomonadota</taxon>
        <taxon>Gammaproteobacteria</taxon>
        <taxon>Enterobacterales</taxon>
        <taxon>Enterobacteriaceae</taxon>
        <taxon>Salmonella</taxon>
    </lineage>
</organism>
<sequence>MIMRQTKLYPVVMAGGSGSRLWPLSRVLYPKQFLCLKGDLTMLQTTICRLNGVECESPLVICNEQHRFIVAEQLRQLNKLTENIILEPAGRNTAPAIALAALAATRQHTDCDPLMLVLAADHAIANEEAFRDAVRGAMPYADAGKLVTFGIVPDLPETGYGYIRRGDVVPGATDAVAFEVAQFVEKPGLETAQAYVASGDYYWNSGMFLFRAGRYLEELKKFRPDILAACEQAMRGVDPDLDFIRVDEEAFLACPEESIDYAVMERTADAVVMPMDAGWSDVGSWSSLWEISAHTPEGNVHHGDVISHKTENSYVYAESGLVTTVGVKDLVVVQTKDAVLIADRHAVQDVKKVVEKIKADGRHEHHMHREVYRPWGKYDSIDAGERYQVKRITVKPGEGLSVQMHHHRAEHWVVVAGTARVTINGEVKLLGENESIYIPLGATHCLENPGKIPLDLIEVRSGSYLEEDDVVRFEDRYGRV</sequence>
<dbReference type="EC" id="2.7.7.13"/>
<dbReference type="EMBL" id="X59886">
    <property type="protein sequence ID" value="CAA42540.1"/>
    <property type="molecule type" value="Genomic_DNA"/>
</dbReference>
<dbReference type="EMBL" id="AE006468">
    <property type="protein sequence ID" value="AAL21009.1"/>
    <property type="molecule type" value="Genomic_DNA"/>
</dbReference>
<dbReference type="PIR" id="S16290">
    <property type="entry name" value="S16290"/>
</dbReference>
<dbReference type="RefSeq" id="NP_461050.3">
    <property type="nucleotide sequence ID" value="NC_003197.2"/>
</dbReference>
<dbReference type="RefSeq" id="WP_000605938.1">
    <property type="nucleotide sequence ID" value="NC_003197.2"/>
</dbReference>
<dbReference type="SMR" id="P26340"/>
<dbReference type="STRING" id="99287.STM2105"/>
<dbReference type="PaxDb" id="99287-STM2105"/>
<dbReference type="GeneID" id="1253626"/>
<dbReference type="KEGG" id="stm:STM2105"/>
<dbReference type="HOGENOM" id="CLU_035527_1_0_6"/>
<dbReference type="PhylomeDB" id="P26340"/>
<dbReference type="BioCyc" id="SENT99287:STM2105-MONOMER"/>
<dbReference type="UniPathway" id="UPA00126">
    <property type="reaction ID" value="UER00930"/>
</dbReference>
<dbReference type="Proteomes" id="UP000001014">
    <property type="component" value="Chromosome"/>
</dbReference>
<dbReference type="GO" id="GO:0005525">
    <property type="term" value="F:GTP binding"/>
    <property type="evidence" value="ECO:0007669"/>
    <property type="project" value="UniProtKB-KW"/>
</dbReference>
<dbReference type="GO" id="GO:0004475">
    <property type="term" value="F:mannose-1-phosphate guanylyltransferase (GTP) activity"/>
    <property type="evidence" value="ECO:0000318"/>
    <property type="project" value="GO_Central"/>
</dbReference>
<dbReference type="GO" id="GO:0009298">
    <property type="term" value="P:GDP-mannose biosynthetic process"/>
    <property type="evidence" value="ECO:0000318"/>
    <property type="project" value="GO_Central"/>
</dbReference>
<dbReference type="GO" id="GO:0009103">
    <property type="term" value="P:lipopolysaccharide biosynthetic process"/>
    <property type="evidence" value="ECO:0007669"/>
    <property type="project" value="UniProtKB-KW"/>
</dbReference>
<dbReference type="CDD" id="cd02213">
    <property type="entry name" value="cupin_PMI_typeII_C"/>
    <property type="match status" value="1"/>
</dbReference>
<dbReference type="CDD" id="cd02509">
    <property type="entry name" value="GDP-M1P_Guanylyltransferase"/>
    <property type="match status" value="1"/>
</dbReference>
<dbReference type="FunFam" id="3.90.550.10:FF:000046">
    <property type="entry name" value="Mannose-1-phosphate guanylyltransferase (GDP)"/>
    <property type="match status" value="1"/>
</dbReference>
<dbReference type="FunFam" id="2.60.120.10:FF:000032">
    <property type="entry name" value="Mannose-1-phosphate guanylyltransferase/mannose-6-phosphate isomerase"/>
    <property type="match status" value="1"/>
</dbReference>
<dbReference type="Gene3D" id="2.60.120.10">
    <property type="entry name" value="Jelly Rolls"/>
    <property type="match status" value="1"/>
</dbReference>
<dbReference type="Gene3D" id="3.90.550.10">
    <property type="entry name" value="Spore Coat Polysaccharide Biosynthesis Protein SpsA, Chain A"/>
    <property type="match status" value="1"/>
</dbReference>
<dbReference type="InterPro" id="IPR049577">
    <property type="entry name" value="GMPP_N"/>
</dbReference>
<dbReference type="InterPro" id="IPR006375">
    <property type="entry name" value="Man1P_GuaTrfase/Man6P_Isoase"/>
</dbReference>
<dbReference type="InterPro" id="IPR001538">
    <property type="entry name" value="Man6P_isomerase-2_C"/>
</dbReference>
<dbReference type="InterPro" id="IPR054566">
    <property type="entry name" value="ManC/GMP-like_b-helix"/>
</dbReference>
<dbReference type="InterPro" id="IPR051161">
    <property type="entry name" value="Mannose-6P_isomerase_type2"/>
</dbReference>
<dbReference type="InterPro" id="IPR005835">
    <property type="entry name" value="NTP_transferase_dom"/>
</dbReference>
<dbReference type="InterPro" id="IPR029044">
    <property type="entry name" value="Nucleotide-diphossugar_trans"/>
</dbReference>
<dbReference type="InterPro" id="IPR014710">
    <property type="entry name" value="RmlC-like_jellyroll"/>
</dbReference>
<dbReference type="InterPro" id="IPR011051">
    <property type="entry name" value="RmlC_Cupin_sf"/>
</dbReference>
<dbReference type="NCBIfam" id="TIGR01479">
    <property type="entry name" value="GMP_PMI"/>
    <property type="match status" value="1"/>
</dbReference>
<dbReference type="NCBIfam" id="NF012004">
    <property type="entry name" value="PRK15460.1"/>
    <property type="match status" value="1"/>
</dbReference>
<dbReference type="PANTHER" id="PTHR46390">
    <property type="entry name" value="MANNOSE-1-PHOSPHATE GUANYLYLTRANSFERASE"/>
    <property type="match status" value="1"/>
</dbReference>
<dbReference type="PANTHER" id="PTHR46390:SF1">
    <property type="entry name" value="MANNOSE-1-PHOSPHATE GUANYLYLTRANSFERASE"/>
    <property type="match status" value="1"/>
</dbReference>
<dbReference type="Pfam" id="PF22640">
    <property type="entry name" value="ManC_GMP_beta-helix"/>
    <property type="match status" value="1"/>
</dbReference>
<dbReference type="Pfam" id="PF01050">
    <property type="entry name" value="MannoseP_isomer"/>
    <property type="match status" value="1"/>
</dbReference>
<dbReference type="Pfam" id="PF00483">
    <property type="entry name" value="NTP_transferase"/>
    <property type="match status" value="1"/>
</dbReference>
<dbReference type="SUPFAM" id="SSF53448">
    <property type="entry name" value="Nucleotide-diphospho-sugar transferases"/>
    <property type="match status" value="1"/>
</dbReference>
<dbReference type="SUPFAM" id="SSF51182">
    <property type="entry name" value="RmlC-like cupins"/>
    <property type="match status" value="1"/>
</dbReference>
<keyword id="KW-0972">Capsule biogenesis/degradation</keyword>
<keyword id="KW-0342">GTP-binding</keyword>
<keyword id="KW-0448">Lipopolysaccharide biosynthesis</keyword>
<keyword id="KW-0547">Nucleotide-binding</keyword>
<keyword id="KW-0548">Nucleotidyltransferase</keyword>
<keyword id="KW-1185">Reference proteome</keyword>
<keyword id="KW-0808">Transferase</keyword>
<gene>
    <name type="primary">manC</name>
    <name type="synonym">cpsB</name>
    <name type="ordered locus">STM2105</name>
</gene>